<dbReference type="EC" id="2.1.2.11" evidence="1"/>
<dbReference type="EMBL" id="CP000267">
    <property type="protein sequence ID" value="ABD70744.1"/>
    <property type="molecule type" value="Genomic_DNA"/>
</dbReference>
<dbReference type="RefSeq" id="WP_011465310.1">
    <property type="nucleotide sequence ID" value="NC_007908.1"/>
</dbReference>
<dbReference type="SMR" id="Q21U09"/>
<dbReference type="STRING" id="338969.Rfer_3033"/>
<dbReference type="KEGG" id="rfr:Rfer_3033"/>
<dbReference type="eggNOG" id="COG0413">
    <property type="taxonomic scope" value="Bacteria"/>
</dbReference>
<dbReference type="HOGENOM" id="CLU_036645_1_0_4"/>
<dbReference type="OrthoDB" id="9781789at2"/>
<dbReference type="UniPathway" id="UPA00028">
    <property type="reaction ID" value="UER00003"/>
</dbReference>
<dbReference type="Proteomes" id="UP000008332">
    <property type="component" value="Chromosome"/>
</dbReference>
<dbReference type="GO" id="GO:0005737">
    <property type="term" value="C:cytoplasm"/>
    <property type="evidence" value="ECO:0007669"/>
    <property type="project" value="UniProtKB-SubCell"/>
</dbReference>
<dbReference type="GO" id="GO:0003864">
    <property type="term" value="F:3-methyl-2-oxobutanoate hydroxymethyltransferase activity"/>
    <property type="evidence" value="ECO:0007669"/>
    <property type="project" value="UniProtKB-UniRule"/>
</dbReference>
<dbReference type="GO" id="GO:0000287">
    <property type="term" value="F:magnesium ion binding"/>
    <property type="evidence" value="ECO:0007669"/>
    <property type="project" value="TreeGrafter"/>
</dbReference>
<dbReference type="GO" id="GO:0015940">
    <property type="term" value="P:pantothenate biosynthetic process"/>
    <property type="evidence" value="ECO:0007669"/>
    <property type="project" value="UniProtKB-UniRule"/>
</dbReference>
<dbReference type="CDD" id="cd06557">
    <property type="entry name" value="KPHMT-like"/>
    <property type="match status" value="1"/>
</dbReference>
<dbReference type="FunFam" id="3.20.20.60:FF:000003">
    <property type="entry name" value="3-methyl-2-oxobutanoate hydroxymethyltransferase"/>
    <property type="match status" value="1"/>
</dbReference>
<dbReference type="Gene3D" id="3.20.20.60">
    <property type="entry name" value="Phosphoenolpyruvate-binding domains"/>
    <property type="match status" value="1"/>
</dbReference>
<dbReference type="HAMAP" id="MF_00156">
    <property type="entry name" value="PanB"/>
    <property type="match status" value="1"/>
</dbReference>
<dbReference type="InterPro" id="IPR003700">
    <property type="entry name" value="Pantoate_hydroxy_MeTrfase"/>
</dbReference>
<dbReference type="InterPro" id="IPR015813">
    <property type="entry name" value="Pyrv/PenolPyrv_kinase-like_dom"/>
</dbReference>
<dbReference type="InterPro" id="IPR040442">
    <property type="entry name" value="Pyrv_kinase-like_dom_sf"/>
</dbReference>
<dbReference type="NCBIfam" id="TIGR00222">
    <property type="entry name" value="panB"/>
    <property type="match status" value="1"/>
</dbReference>
<dbReference type="NCBIfam" id="NF001452">
    <property type="entry name" value="PRK00311.1"/>
    <property type="match status" value="1"/>
</dbReference>
<dbReference type="PANTHER" id="PTHR20881">
    <property type="entry name" value="3-METHYL-2-OXOBUTANOATE HYDROXYMETHYLTRANSFERASE"/>
    <property type="match status" value="1"/>
</dbReference>
<dbReference type="PANTHER" id="PTHR20881:SF0">
    <property type="entry name" value="3-METHYL-2-OXOBUTANOATE HYDROXYMETHYLTRANSFERASE"/>
    <property type="match status" value="1"/>
</dbReference>
<dbReference type="Pfam" id="PF02548">
    <property type="entry name" value="Pantoate_transf"/>
    <property type="match status" value="1"/>
</dbReference>
<dbReference type="PIRSF" id="PIRSF000388">
    <property type="entry name" value="Pantoate_hydroxy_MeTrfase"/>
    <property type="match status" value="1"/>
</dbReference>
<dbReference type="SUPFAM" id="SSF51621">
    <property type="entry name" value="Phosphoenolpyruvate/pyruvate domain"/>
    <property type="match status" value="1"/>
</dbReference>
<reference key="1">
    <citation type="submission" date="2006-02" db="EMBL/GenBank/DDBJ databases">
        <title>Complete sequence of chromosome of Rhodoferax ferrireducens DSM 15236.</title>
        <authorList>
            <person name="Copeland A."/>
            <person name="Lucas S."/>
            <person name="Lapidus A."/>
            <person name="Barry K."/>
            <person name="Detter J.C."/>
            <person name="Glavina del Rio T."/>
            <person name="Hammon N."/>
            <person name="Israni S."/>
            <person name="Pitluck S."/>
            <person name="Brettin T."/>
            <person name="Bruce D."/>
            <person name="Han C."/>
            <person name="Tapia R."/>
            <person name="Gilna P."/>
            <person name="Kiss H."/>
            <person name="Schmutz J."/>
            <person name="Larimer F."/>
            <person name="Land M."/>
            <person name="Kyrpides N."/>
            <person name="Ivanova N."/>
            <person name="Richardson P."/>
        </authorList>
    </citation>
    <scope>NUCLEOTIDE SEQUENCE [LARGE SCALE GENOMIC DNA]</scope>
    <source>
        <strain>ATCC BAA-621 / DSM 15236 / T118</strain>
    </source>
</reference>
<comment type="function">
    <text evidence="1">Catalyzes the reversible reaction in which hydroxymethyl group from 5,10-methylenetetrahydrofolate is transferred onto alpha-ketoisovalerate to form ketopantoate.</text>
</comment>
<comment type="catalytic activity">
    <reaction evidence="1">
        <text>3-methyl-2-oxobutanoate + (6R)-5,10-methylene-5,6,7,8-tetrahydrofolate + H2O = 2-dehydropantoate + (6S)-5,6,7,8-tetrahydrofolate</text>
        <dbReference type="Rhea" id="RHEA:11824"/>
        <dbReference type="ChEBI" id="CHEBI:11561"/>
        <dbReference type="ChEBI" id="CHEBI:11851"/>
        <dbReference type="ChEBI" id="CHEBI:15377"/>
        <dbReference type="ChEBI" id="CHEBI:15636"/>
        <dbReference type="ChEBI" id="CHEBI:57453"/>
        <dbReference type="EC" id="2.1.2.11"/>
    </reaction>
</comment>
<comment type="cofactor">
    <cofactor evidence="1">
        <name>Mg(2+)</name>
        <dbReference type="ChEBI" id="CHEBI:18420"/>
    </cofactor>
    <text evidence="1">Binds 1 Mg(2+) ion per subunit.</text>
</comment>
<comment type="pathway">
    <text evidence="1">Cofactor biosynthesis; (R)-pantothenate biosynthesis; (R)-pantoate from 3-methyl-2-oxobutanoate: step 1/2.</text>
</comment>
<comment type="subunit">
    <text evidence="1">Homodecamer; pentamer of dimers.</text>
</comment>
<comment type="subcellular location">
    <subcellularLocation>
        <location evidence="1">Cytoplasm</location>
    </subcellularLocation>
</comment>
<comment type="similarity">
    <text evidence="1">Belongs to the PanB family.</text>
</comment>
<sequence>MSASAESTNATPYGTLPPTAAASARKPISLPRLLEMHARGEKLTMLTAYDATFAAVADAAGVECILVGDSLGMVCQGLSSTMGVTLQAMCYHIESVARGLRRAQATAWLIGDLPYGSYHESREQALRSAAALMQAGSHMVKLEGGGWTADTVRFLVERGIPVCAHLGLTPQTVHALGGYRVQGKTQESAALMKRQAHELQDAGAALLVLEMVPAALAAELTRELTHCATIGIGAGKDTAGQVLVLHDMLGINLGKMPKFVRNFMTGAPGVKEAMQAYVAAVKNGSFPDNTQHAW</sequence>
<feature type="chain" id="PRO_0000297354" description="3-methyl-2-oxobutanoate hydroxymethyltransferase">
    <location>
        <begin position="1"/>
        <end position="294"/>
    </location>
</feature>
<feature type="region of interest" description="Disordered" evidence="2">
    <location>
        <begin position="1"/>
        <end position="21"/>
    </location>
</feature>
<feature type="compositionally biased region" description="Polar residues" evidence="2">
    <location>
        <begin position="1"/>
        <end position="12"/>
    </location>
</feature>
<feature type="active site" description="Proton acceptor" evidence="1">
    <location>
        <position position="210"/>
    </location>
</feature>
<feature type="binding site" evidence="1">
    <location>
        <begin position="69"/>
        <end position="70"/>
    </location>
    <ligand>
        <name>3-methyl-2-oxobutanoate</name>
        <dbReference type="ChEBI" id="CHEBI:11851"/>
    </ligand>
</feature>
<feature type="binding site" evidence="1">
    <location>
        <position position="69"/>
    </location>
    <ligand>
        <name>Mg(2+)</name>
        <dbReference type="ChEBI" id="CHEBI:18420"/>
    </ligand>
</feature>
<feature type="binding site" evidence="1">
    <location>
        <position position="112"/>
    </location>
    <ligand>
        <name>3-methyl-2-oxobutanoate</name>
        <dbReference type="ChEBI" id="CHEBI:11851"/>
    </ligand>
</feature>
<feature type="binding site" evidence="1">
    <location>
        <position position="112"/>
    </location>
    <ligand>
        <name>Mg(2+)</name>
        <dbReference type="ChEBI" id="CHEBI:18420"/>
    </ligand>
</feature>
<feature type="binding site" evidence="1">
    <location>
        <position position="141"/>
    </location>
    <ligand>
        <name>3-methyl-2-oxobutanoate</name>
        <dbReference type="ChEBI" id="CHEBI:11851"/>
    </ligand>
</feature>
<feature type="binding site" evidence="1">
    <location>
        <position position="143"/>
    </location>
    <ligand>
        <name>Mg(2+)</name>
        <dbReference type="ChEBI" id="CHEBI:18420"/>
    </ligand>
</feature>
<proteinExistence type="inferred from homology"/>
<evidence type="ECO:0000255" key="1">
    <source>
        <dbReference type="HAMAP-Rule" id="MF_00156"/>
    </source>
</evidence>
<evidence type="ECO:0000256" key="2">
    <source>
        <dbReference type="SAM" id="MobiDB-lite"/>
    </source>
</evidence>
<keyword id="KW-0963">Cytoplasm</keyword>
<keyword id="KW-0460">Magnesium</keyword>
<keyword id="KW-0479">Metal-binding</keyword>
<keyword id="KW-0566">Pantothenate biosynthesis</keyword>
<keyword id="KW-1185">Reference proteome</keyword>
<keyword id="KW-0808">Transferase</keyword>
<name>PANB_ALBFT</name>
<organism>
    <name type="scientific">Albidiferax ferrireducens (strain ATCC BAA-621 / DSM 15236 / T118)</name>
    <name type="common">Rhodoferax ferrireducens</name>
    <dbReference type="NCBI Taxonomy" id="338969"/>
    <lineage>
        <taxon>Bacteria</taxon>
        <taxon>Pseudomonadati</taxon>
        <taxon>Pseudomonadota</taxon>
        <taxon>Betaproteobacteria</taxon>
        <taxon>Burkholderiales</taxon>
        <taxon>Comamonadaceae</taxon>
        <taxon>Rhodoferax</taxon>
    </lineage>
</organism>
<gene>
    <name evidence="1" type="primary">panB</name>
    <name type="ordered locus">Rfer_3033</name>
</gene>
<protein>
    <recommendedName>
        <fullName evidence="1">3-methyl-2-oxobutanoate hydroxymethyltransferase</fullName>
        <ecNumber evidence="1">2.1.2.11</ecNumber>
    </recommendedName>
    <alternativeName>
        <fullName evidence="1">Ketopantoate hydroxymethyltransferase</fullName>
        <shortName evidence="1">KPHMT</shortName>
    </alternativeName>
</protein>
<accession>Q21U09</accession>